<comment type="function">
    <text evidence="1">The RuvA-RuvB-RuvC complex processes Holliday junction (HJ) DNA during genetic recombination and DNA repair, while the RuvA-RuvB complex plays an important role in the rescue of blocked DNA replication forks via replication fork reversal (RFR). RuvA specifically binds to HJ cruciform DNA, conferring on it an open structure. The RuvB hexamer acts as an ATP-dependent pump, pulling dsDNA into and through the RuvAB complex. HJ branch migration allows RuvC to scan DNA until it finds its consensus sequence, where it cleaves and resolves the cruciform DNA.</text>
</comment>
<comment type="subunit">
    <text evidence="1">Homotetramer. Forms an RuvA(8)-RuvB(12)-Holliday junction (HJ) complex. HJ DNA is sandwiched between 2 RuvA tetramers; dsDNA enters through RuvA and exits via RuvB. An RuvB hexamer assembles on each DNA strand where it exits the tetramer. Each RuvB hexamer is contacted by two RuvA subunits (via domain III) on 2 adjacent RuvB subunits; this complex drives branch migration. In the full resolvosome a probable DNA-RuvA(4)-RuvB(12)-RuvC(2) complex forms which resolves the HJ.</text>
</comment>
<comment type="subcellular location">
    <subcellularLocation>
        <location evidence="1">Cytoplasm</location>
    </subcellularLocation>
</comment>
<comment type="domain">
    <text evidence="1">Has three domains with a flexible linker between the domains II and III and assumes an 'L' shape. Domain III is highly mobile and contacts RuvB.</text>
</comment>
<comment type="similarity">
    <text evidence="1">Belongs to the RuvA family.</text>
</comment>
<protein>
    <recommendedName>
        <fullName evidence="1">Holliday junction branch migration complex subunit RuvA</fullName>
    </recommendedName>
</protein>
<keyword id="KW-0963">Cytoplasm</keyword>
<keyword id="KW-0227">DNA damage</keyword>
<keyword id="KW-0233">DNA recombination</keyword>
<keyword id="KW-0234">DNA repair</keyword>
<keyword id="KW-0238">DNA-binding</keyword>
<gene>
    <name evidence="1" type="primary">ruvA</name>
    <name type="ordered locus">Xfasm12_1061</name>
</gene>
<proteinExistence type="inferred from homology"/>
<organism>
    <name type="scientific">Xylella fastidiosa (strain M12)</name>
    <dbReference type="NCBI Taxonomy" id="405440"/>
    <lineage>
        <taxon>Bacteria</taxon>
        <taxon>Pseudomonadati</taxon>
        <taxon>Pseudomonadota</taxon>
        <taxon>Gammaproteobacteria</taxon>
        <taxon>Lysobacterales</taxon>
        <taxon>Lysobacteraceae</taxon>
        <taxon>Xylella</taxon>
    </lineage>
</organism>
<reference key="1">
    <citation type="journal article" date="2010" name="J. Bacteriol.">
        <title>Whole genome sequences of two Xylella fastidiosa strains (M12 and M23) causing almond leaf scorch disease in California.</title>
        <authorList>
            <person name="Chen J."/>
            <person name="Xie G."/>
            <person name="Han S."/>
            <person name="Chertkov O."/>
            <person name="Sims D."/>
            <person name="Civerolo E.L."/>
        </authorList>
    </citation>
    <scope>NUCLEOTIDE SEQUENCE [LARGE SCALE GENOMIC DNA]</scope>
    <source>
        <strain>M12</strain>
    </source>
</reference>
<accession>B0U2E1</accession>
<name>RUVA_XYLFM</name>
<dbReference type="EMBL" id="CP000941">
    <property type="protein sequence ID" value="ACA12020.1"/>
    <property type="molecule type" value="Genomic_DNA"/>
</dbReference>
<dbReference type="RefSeq" id="WP_004085425.1">
    <property type="nucleotide sequence ID" value="NC_010513.1"/>
</dbReference>
<dbReference type="SMR" id="B0U2E1"/>
<dbReference type="KEGG" id="xfm:Xfasm12_1061"/>
<dbReference type="HOGENOM" id="CLU_087936_0_0_6"/>
<dbReference type="GO" id="GO:0005737">
    <property type="term" value="C:cytoplasm"/>
    <property type="evidence" value="ECO:0007669"/>
    <property type="project" value="UniProtKB-SubCell"/>
</dbReference>
<dbReference type="GO" id="GO:0009379">
    <property type="term" value="C:Holliday junction helicase complex"/>
    <property type="evidence" value="ECO:0007669"/>
    <property type="project" value="InterPro"/>
</dbReference>
<dbReference type="GO" id="GO:0048476">
    <property type="term" value="C:Holliday junction resolvase complex"/>
    <property type="evidence" value="ECO:0007669"/>
    <property type="project" value="UniProtKB-UniRule"/>
</dbReference>
<dbReference type="GO" id="GO:0005524">
    <property type="term" value="F:ATP binding"/>
    <property type="evidence" value="ECO:0007669"/>
    <property type="project" value="InterPro"/>
</dbReference>
<dbReference type="GO" id="GO:0000400">
    <property type="term" value="F:four-way junction DNA binding"/>
    <property type="evidence" value="ECO:0007669"/>
    <property type="project" value="UniProtKB-UniRule"/>
</dbReference>
<dbReference type="GO" id="GO:0009378">
    <property type="term" value="F:four-way junction helicase activity"/>
    <property type="evidence" value="ECO:0007669"/>
    <property type="project" value="InterPro"/>
</dbReference>
<dbReference type="GO" id="GO:0006310">
    <property type="term" value="P:DNA recombination"/>
    <property type="evidence" value="ECO:0007669"/>
    <property type="project" value="UniProtKB-UniRule"/>
</dbReference>
<dbReference type="GO" id="GO:0006281">
    <property type="term" value="P:DNA repair"/>
    <property type="evidence" value="ECO:0007669"/>
    <property type="project" value="UniProtKB-UniRule"/>
</dbReference>
<dbReference type="CDD" id="cd14332">
    <property type="entry name" value="UBA_RuvA_C"/>
    <property type="match status" value="1"/>
</dbReference>
<dbReference type="Gene3D" id="1.10.150.20">
    <property type="entry name" value="5' to 3' exonuclease, C-terminal subdomain"/>
    <property type="match status" value="1"/>
</dbReference>
<dbReference type="Gene3D" id="1.10.8.10">
    <property type="entry name" value="DNA helicase RuvA subunit, C-terminal domain"/>
    <property type="match status" value="1"/>
</dbReference>
<dbReference type="Gene3D" id="2.40.50.140">
    <property type="entry name" value="Nucleic acid-binding proteins"/>
    <property type="match status" value="1"/>
</dbReference>
<dbReference type="HAMAP" id="MF_00031">
    <property type="entry name" value="DNA_HJ_migration_RuvA"/>
    <property type="match status" value="1"/>
</dbReference>
<dbReference type="InterPro" id="IPR013849">
    <property type="entry name" value="DNA_helicase_Holl-junc_RuvA_I"/>
</dbReference>
<dbReference type="InterPro" id="IPR003583">
    <property type="entry name" value="Hlx-hairpin-Hlx_DNA-bd_motif"/>
</dbReference>
<dbReference type="InterPro" id="IPR012340">
    <property type="entry name" value="NA-bd_OB-fold"/>
</dbReference>
<dbReference type="InterPro" id="IPR000085">
    <property type="entry name" value="RuvA"/>
</dbReference>
<dbReference type="InterPro" id="IPR010994">
    <property type="entry name" value="RuvA_2-like"/>
</dbReference>
<dbReference type="InterPro" id="IPR011114">
    <property type="entry name" value="RuvA_C"/>
</dbReference>
<dbReference type="InterPro" id="IPR036267">
    <property type="entry name" value="RuvA_C_sf"/>
</dbReference>
<dbReference type="NCBIfam" id="TIGR00084">
    <property type="entry name" value="ruvA"/>
    <property type="match status" value="1"/>
</dbReference>
<dbReference type="Pfam" id="PF14520">
    <property type="entry name" value="HHH_5"/>
    <property type="match status" value="1"/>
</dbReference>
<dbReference type="Pfam" id="PF07499">
    <property type="entry name" value="RuvA_C"/>
    <property type="match status" value="1"/>
</dbReference>
<dbReference type="Pfam" id="PF01330">
    <property type="entry name" value="RuvA_N"/>
    <property type="match status" value="1"/>
</dbReference>
<dbReference type="SMART" id="SM00278">
    <property type="entry name" value="HhH1"/>
    <property type="match status" value="2"/>
</dbReference>
<dbReference type="SUPFAM" id="SSF46929">
    <property type="entry name" value="DNA helicase RuvA subunit, C-terminal domain"/>
    <property type="match status" value="1"/>
</dbReference>
<dbReference type="SUPFAM" id="SSF50249">
    <property type="entry name" value="Nucleic acid-binding proteins"/>
    <property type="match status" value="1"/>
</dbReference>
<dbReference type="SUPFAM" id="SSF47781">
    <property type="entry name" value="RuvA domain 2-like"/>
    <property type="match status" value="1"/>
</dbReference>
<feature type="chain" id="PRO_1000090389" description="Holliday junction branch migration complex subunit RuvA">
    <location>
        <begin position="1"/>
        <end position="194"/>
    </location>
</feature>
<feature type="region of interest" description="Domain I" evidence="1">
    <location>
        <begin position="1"/>
        <end position="64"/>
    </location>
</feature>
<feature type="region of interest" description="Domain II" evidence="1">
    <location>
        <begin position="65"/>
        <end position="140"/>
    </location>
</feature>
<feature type="region of interest" description="Flexible linker" evidence="1">
    <location>
        <begin position="140"/>
        <end position="144"/>
    </location>
</feature>
<feature type="region of interest" description="Domain III" evidence="1">
    <location>
        <begin position="145"/>
        <end position="194"/>
    </location>
</feature>
<sequence>MIGRLRGVLTSKTPPWLVVDVCGVGYELEVPMSTFCELPDVGYEVNLFTHYTQKDDSAALYGFLSESERRLFRHLQRVSGIGTKIALAVLSSVSVDTFAGLIQAGDVNALTVIPGIGKKTAERMLVELRDRAADFNNGISTSGKLNLDTVSEAALALQQLGYKPAEAARMARDAGTESDDVATVIKKALQAALC</sequence>
<evidence type="ECO:0000255" key="1">
    <source>
        <dbReference type="HAMAP-Rule" id="MF_00031"/>
    </source>
</evidence>